<keyword id="KW-0004">4Fe-4S</keyword>
<keyword id="KW-0408">Iron</keyword>
<keyword id="KW-0411">Iron-sulfur</keyword>
<keyword id="KW-0456">Lyase</keyword>
<keyword id="KW-0479">Metal-binding</keyword>
<keyword id="KW-1185">Reference proteome</keyword>
<keyword id="KW-0949">S-adenosyl-L-methionine</keyword>
<keyword id="KW-0784">Thiamine biosynthesis</keyword>
<keyword id="KW-0862">Zinc</keyword>
<gene>
    <name evidence="1" type="primary">thiC</name>
    <name type="ordered locus">MAB_4196</name>
</gene>
<accession>B1MIP8</accession>
<name>THIC_MYCA9</name>
<dbReference type="EC" id="4.1.99.17" evidence="1"/>
<dbReference type="EMBL" id="CU458896">
    <property type="protein sequence ID" value="CAM64269.1"/>
    <property type="molecule type" value="Genomic_DNA"/>
</dbReference>
<dbReference type="RefSeq" id="WP_005078051.1">
    <property type="nucleotide sequence ID" value="NZ_MLCG01000001.1"/>
</dbReference>
<dbReference type="SMR" id="B1MIP8"/>
<dbReference type="GeneID" id="93381141"/>
<dbReference type="KEGG" id="mab:MAB_4196"/>
<dbReference type="UniPathway" id="UPA00060"/>
<dbReference type="Proteomes" id="UP000007137">
    <property type="component" value="Chromosome"/>
</dbReference>
<dbReference type="GO" id="GO:0005829">
    <property type="term" value="C:cytosol"/>
    <property type="evidence" value="ECO:0007669"/>
    <property type="project" value="TreeGrafter"/>
</dbReference>
<dbReference type="GO" id="GO:0051539">
    <property type="term" value="F:4 iron, 4 sulfur cluster binding"/>
    <property type="evidence" value="ECO:0007669"/>
    <property type="project" value="UniProtKB-KW"/>
</dbReference>
<dbReference type="GO" id="GO:0016830">
    <property type="term" value="F:carbon-carbon lyase activity"/>
    <property type="evidence" value="ECO:0007669"/>
    <property type="project" value="InterPro"/>
</dbReference>
<dbReference type="GO" id="GO:0008270">
    <property type="term" value="F:zinc ion binding"/>
    <property type="evidence" value="ECO:0007669"/>
    <property type="project" value="UniProtKB-UniRule"/>
</dbReference>
<dbReference type="GO" id="GO:0009228">
    <property type="term" value="P:thiamine biosynthetic process"/>
    <property type="evidence" value="ECO:0007669"/>
    <property type="project" value="UniProtKB-KW"/>
</dbReference>
<dbReference type="GO" id="GO:0009229">
    <property type="term" value="P:thiamine diphosphate biosynthetic process"/>
    <property type="evidence" value="ECO:0007669"/>
    <property type="project" value="UniProtKB-UniRule"/>
</dbReference>
<dbReference type="FunFam" id="3.20.20.540:FF:000001">
    <property type="entry name" value="Phosphomethylpyrimidine synthase"/>
    <property type="match status" value="1"/>
</dbReference>
<dbReference type="Gene3D" id="6.10.250.620">
    <property type="match status" value="1"/>
</dbReference>
<dbReference type="Gene3D" id="3.20.20.540">
    <property type="entry name" value="Radical SAM ThiC family, central domain"/>
    <property type="match status" value="1"/>
</dbReference>
<dbReference type="HAMAP" id="MF_00089">
    <property type="entry name" value="ThiC"/>
    <property type="match status" value="1"/>
</dbReference>
<dbReference type="InterPro" id="IPR037509">
    <property type="entry name" value="ThiC"/>
</dbReference>
<dbReference type="InterPro" id="IPR025747">
    <property type="entry name" value="ThiC-associated_dom"/>
</dbReference>
<dbReference type="InterPro" id="IPR038521">
    <property type="entry name" value="ThiC/Bza_core_dom"/>
</dbReference>
<dbReference type="InterPro" id="IPR002817">
    <property type="entry name" value="ThiC/BzaA/B"/>
</dbReference>
<dbReference type="NCBIfam" id="NF006763">
    <property type="entry name" value="PRK09284.1"/>
    <property type="match status" value="1"/>
</dbReference>
<dbReference type="NCBIfam" id="NF009895">
    <property type="entry name" value="PRK13352.1"/>
    <property type="match status" value="1"/>
</dbReference>
<dbReference type="NCBIfam" id="TIGR00190">
    <property type="entry name" value="thiC"/>
    <property type="match status" value="1"/>
</dbReference>
<dbReference type="PANTHER" id="PTHR30557:SF1">
    <property type="entry name" value="PHOSPHOMETHYLPYRIMIDINE SYNTHASE, CHLOROPLASTIC"/>
    <property type="match status" value="1"/>
</dbReference>
<dbReference type="PANTHER" id="PTHR30557">
    <property type="entry name" value="THIAMINE BIOSYNTHESIS PROTEIN THIC"/>
    <property type="match status" value="1"/>
</dbReference>
<dbReference type="Pfam" id="PF13667">
    <property type="entry name" value="ThiC-associated"/>
    <property type="match status" value="1"/>
</dbReference>
<dbReference type="Pfam" id="PF01964">
    <property type="entry name" value="ThiC_Rad_SAM"/>
    <property type="match status" value="1"/>
</dbReference>
<dbReference type="SFLD" id="SFLDF00407">
    <property type="entry name" value="phosphomethylpyrimidine_syntha"/>
    <property type="match status" value="1"/>
</dbReference>
<dbReference type="SFLD" id="SFLDG01114">
    <property type="entry name" value="phosphomethylpyrimidine_syntha"/>
    <property type="match status" value="1"/>
</dbReference>
<dbReference type="SFLD" id="SFLDS00113">
    <property type="entry name" value="Radical_SAM_Phosphomethylpyrim"/>
    <property type="match status" value="1"/>
</dbReference>
<proteinExistence type="inferred from homology"/>
<reference key="1">
    <citation type="journal article" date="2009" name="PLoS ONE">
        <title>Non mycobacterial virulence genes in the genome of the emerging pathogen Mycobacterium abscessus.</title>
        <authorList>
            <person name="Ripoll F."/>
            <person name="Pasek S."/>
            <person name="Schenowitz C."/>
            <person name="Dossat C."/>
            <person name="Barbe V."/>
            <person name="Rottman M."/>
            <person name="Macheras E."/>
            <person name="Heym B."/>
            <person name="Herrmann J.L."/>
            <person name="Daffe M."/>
            <person name="Brosch R."/>
            <person name="Risler J.L."/>
            <person name="Gaillard J.L."/>
        </authorList>
    </citation>
    <scope>NUCLEOTIDE SEQUENCE [LARGE SCALE GENOMIC DNA]</scope>
    <source>
        <strain>ATCC 19977 / DSM 44196 / CCUG 20993 / CIP 104536 / JCM 13569 / NCTC 13031 / TMC 1543 / L948</strain>
    </source>
</reference>
<protein>
    <recommendedName>
        <fullName evidence="1">Phosphomethylpyrimidine synthase</fullName>
        <ecNumber evidence="1">4.1.99.17</ecNumber>
    </recommendedName>
    <alternativeName>
        <fullName evidence="1">Hydroxymethylpyrimidine phosphate synthase</fullName>
        <shortName evidence="1">HMP-P synthase</shortName>
        <shortName evidence="1">HMP-phosphate synthase</shortName>
        <shortName evidence="1">HMPP synthase</shortName>
    </alternativeName>
    <alternativeName>
        <fullName evidence="1">Thiamine biosynthesis protein ThiC</fullName>
    </alternativeName>
</protein>
<feature type="chain" id="PRO_1000093215" description="Phosphomethylpyrimidine synthase">
    <location>
        <begin position="1"/>
        <end position="546"/>
    </location>
</feature>
<feature type="region of interest" description="Disordered" evidence="2">
    <location>
        <begin position="1"/>
        <end position="20"/>
    </location>
</feature>
<feature type="compositionally biased region" description="Polar residues" evidence="2">
    <location>
        <begin position="1"/>
        <end position="19"/>
    </location>
</feature>
<feature type="binding site" evidence="1">
    <location>
        <position position="146"/>
    </location>
    <ligand>
        <name>substrate</name>
    </ligand>
</feature>
<feature type="binding site" evidence="1">
    <location>
        <position position="175"/>
    </location>
    <ligand>
        <name>substrate</name>
    </ligand>
</feature>
<feature type="binding site" evidence="1">
    <location>
        <position position="204"/>
    </location>
    <ligand>
        <name>substrate</name>
    </ligand>
</feature>
<feature type="binding site" evidence="1">
    <location>
        <position position="240"/>
    </location>
    <ligand>
        <name>substrate</name>
    </ligand>
</feature>
<feature type="binding site" evidence="1">
    <location>
        <begin position="260"/>
        <end position="262"/>
    </location>
    <ligand>
        <name>substrate</name>
    </ligand>
</feature>
<feature type="binding site" evidence="1">
    <location>
        <begin position="301"/>
        <end position="304"/>
    </location>
    <ligand>
        <name>substrate</name>
    </ligand>
</feature>
<feature type="binding site" evidence="1">
    <location>
        <position position="340"/>
    </location>
    <ligand>
        <name>substrate</name>
    </ligand>
</feature>
<feature type="binding site" evidence="1">
    <location>
        <position position="344"/>
    </location>
    <ligand>
        <name>Zn(2+)</name>
        <dbReference type="ChEBI" id="CHEBI:29105"/>
    </ligand>
</feature>
<feature type="binding site" evidence="1">
    <location>
        <position position="367"/>
    </location>
    <ligand>
        <name>substrate</name>
    </ligand>
</feature>
<feature type="binding site" evidence="1">
    <location>
        <position position="408"/>
    </location>
    <ligand>
        <name>Zn(2+)</name>
        <dbReference type="ChEBI" id="CHEBI:29105"/>
    </ligand>
</feature>
<feature type="binding site" evidence="1">
    <location>
        <position position="488"/>
    </location>
    <ligand>
        <name>[4Fe-4S] cluster</name>
        <dbReference type="ChEBI" id="CHEBI:49883"/>
        <note>4Fe-4S-S-AdoMet</note>
    </ligand>
</feature>
<feature type="binding site" evidence="1">
    <location>
        <position position="491"/>
    </location>
    <ligand>
        <name>[4Fe-4S] cluster</name>
        <dbReference type="ChEBI" id="CHEBI:49883"/>
        <note>4Fe-4S-S-AdoMet</note>
    </ligand>
</feature>
<feature type="binding site" evidence="1">
    <location>
        <position position="496"/>
    </location>
    <ligand>
        <name>[4Fe-4S] cluster</name>
        <dbReference type="ChEBI" id="CHEBI:49883"/>
        <note>4Fe-4S-S-AdoMet</note>
    </ligand>
</feature>
<evidence type="ECO:0000255" key="1">
    <source>
        <dbReference type="HAMAP-Rule" id="MF_00089"/>
    </source>
</evidence>
<evidence type="ECO:0000256" key="2">
    <source>
        <dbReference type="SAM" id="MobiDB-lite"/>
    </source>
</evidence>
<organism>
    <name type="scientific">Mycobacteroides abscessus (strain ATCC 19977 / DSM 44196 / CCUG 20993 / CIP 104536 / JCM 13569 / NCTC 13031 / TMC 1543 / L948)</name>
    <name type="common">Mycobacterium abscessus</name>
    <dbReference type="NCBI Taxonomy" id="561007"/>
    <lineage>
        <taxon>Bacteria</taxon>
        <taxon>Bacillati</taxon>
        <taxon>Actinomycetota</taxon>
        <taxon>Actinomycetes</taxon>
        <taxon>Mycobacteriales</taxon>
        <taxon>Mycobacteriaceae</taxon>
        <taxon>Mycobacteroides</taxon>
        <taxon>Mycobacteroides abscessus</taxon>
    </lineage>
</organism>
<comment type="function">
    <text evidence="1">Catalyzes the synthesis of the hydroxymethylpyrimidine phosphate (HMP-P) moiety of thiamine from aminoimidazole ribotide (AIR) in a radical S-adenosyl-L-methionine (SAM)-dependent reaction.</text>
</comment>
<comment type="catalytic activity">
    <reaction evidence="1">
        <text>5-amino-1-(5-phospho-beta-D-ribosyl)imidazole + S-adenosyl-L-methionine = 4-amino-2-methyl-5-(phosphooxymethyl)pyrimidine + CO + 5'-deoxyadenosine + formate + L-methionine + 3 H(+)</text>
        <dbReference type="Rhea" id="RHEA:24840"/>
        <dbReference type="ChEBI" id="CHEBI:15378"/>
        <dbReference type="ChEBI" id="CHEBI:15740"/>
        <dbReference type="ChEBI" id="CHEBI:17245"/>
        <dbReference type="ChEBI" id="CHEBI:17319"/>
        <dbReference type="ChEBI" id="CHEBI:57844"/>
        <dbReference type="ChEBI" id="CHEBI:58354"/>
        <dbReference type="ChEBI" id="CHEBI:59789"/>
        <dbReference type="ChEBI" id="CHEBI:137981"/>
        <dbReference type="EC" id="4.1.99.17"/>
    </reaction>
</comment>
<comment type="cofactor">
    <cofactor evidence="1">
        <name>[4Fe-4S] cluster</name>
        <dbReference type="ChEBI" id="CHEBI:49883"/>
    </cofactor>
    <text evidence="1">Binds 1 [4Fe-4S] cluster per subunit. The cluster is coordinated with 3 cysteines and an exchangeable S-adenosyl-L-methionine.</text>
</comment>
<comment type="pathway">
    <text evidence="1">Cofactor biosynthesis; thiamine diphosphate biosynthesis.</text>
</comment>
<comment type="similarity">
    <text evidence="1">Belongs to the ThiC family.</text>
</comment>
<sequence length="546" mass="59945">MSTPSSRSQAPETVTTGPIQGSEKIYQELPNGLRVPQRRVNLTNGEYLDLYDTSGPYTDTNAVIDLHKGLPPRAGIVTDRGTQLQRARAGEITAEMEFIAVREGVPAELVRTEVAAGRAVIPANHKHPESEPMIIGKAFGVKINANIGNSAVTSSIAEEVEKMVWAIRWGADNIMDLSTGKDIHQTREWILRNSPVPVGTVPIYQALEKTNGDPAALTWELYRDTVIEQAEQGVDYMTVHAGVLLRYVPLTAKRVTGIVSRGGSIMAAWCLAHHRESFLYTHFEELCEILARYDVTFSLGDGLRPGSIADANDEAQFAELRTLGELTKIAKSHGVQVMIEGPGHVPMHKIVENVKLEEELCEEAPFYTLGPLATDIAPAYDHITSAIGAAIIAQAGTAMLCYVTPKEHLGLPDRKDVKDGVIAYKIAAHSADLAKGHPRAQLRDNALSKARFEFRWEDQFNLSLDPDTAREFHDETLPAEPAKTAHFCSMCGPKFCSMRITADIREFAAENGLETQEDIDAMLARGMEEKSAEFAEHGNRVYLPIA</sequence>